<feature type="chain" id="PRO_0000219955" description="PqqA peptide cyclase">
    <location>
        <begin position="1"/>
        <end position="376"/>
    </location>
</feature>
<feature type="domain" description="Radical SAM core" evidence="2">
    <location>
        <begin position="4"/>
        <end position="219"/>
    </location>
</feature>
<feature type="binding site" evidence="1">
    <location>
        <position position="18"/>
    </location>
    <ligand>
        <name>[4Fe-4S] cluster</name>
        <dbReference type="ChEBI" id="CHEBI:49883"/>
        <note>4Fe-4S-S-AdoMet</note>
    </ligand>
</feature>
<feature type="binding site" evidence="1">
    <location>
        <position position="22"/>
    </location>
    <ligand>
        <name>[4Fe-4S] cluster</name>
        <dbReference type="ChEBI" id="CHEBI:49883"/>
        <note>4Fe-4S-S-AdoMet</note>
    </ligand>
</feature>
<feature type="binding site" evidence="1">
    <location>
        <position position="25"/>
    </location>
    <ligand>
        <name>[4Fe-4S] cluster</name>
        <dbReference type="ChEBI" id="CHEBI:49883"/>
        <note>4Fe-4S-S-AdoMet</note>
    </ligand>
</feature>
<dbReference type="EC" id="1.21.98.4" evidence="1"/>
<dbReference type="EMBL" id="AE008922">
    <property type="protein sequence ID" value="AAM42212.1"/>
    <property type="molecule type" value="Genomic_DNA"/>
</dbReference>
<dbReference type="RefSeq" id="NP_638288.1">
    <property type="nucleotide sequence ID" value="NC_003902.1"/>
</dbReference>
<dbReference type="RefSeq" id="WP_011038063.1">
    <property type="nucleotide sequence ID" value="NC_003902.1"/>
</dbReference>
<dbReference type="SMR" id="Q8P6M7"/>
<dbReference type="STRING" id="190485.XCC2940"/>
<dbReference type="EnsemblBacteria" id="AAM42212">
    <property type="protein sequence ID" value="AAM42212"/>
    <property type="gene ID" value="XCC2940"/>
</dbReference>
<dbReference type="KEGG" id="xcc:XCC2940"/>
<dbReference type="PATRIC" id="fig|190485.4.peg.3144"/>
<dbReference type="eggNOG" id="COG0535">
    <property type="taxonomic scope" value="Bacteria"/>
</dbReference>
<dbReference type="HOGENOM" id="CLU_009273_4_7_6"/>
<dbReference type="OrthoDB" id="9792276at2"/>
<dbReference type="UniPathway" id="UPA00539"/>
<dbReference type="Proteomes" id="UP000001010">
    <property type="component" value="Chromosome"/>
</dbReference>
<dbReference type="GO" id="GO:0051539">
    <property type="term" value="F:4 iron, 4 sulfur cluster binding"/>
    <property type="evidence" value="ECO:0007669"/>
    <property type="project" value="UniProtKB-KW"/>
</dbReference>
<dbReference type="GO" id="GO:0009975">
    <property type="term" value="F:cyclase activity"/>
    <property type="evidence" value="ECO:0007669"/>
    <property type="project" value="UniProtKB-UniRule"/>
</dbReference>
<dbReference type="GO" id="GO:0005506">
    <property type="term" value="F:iron ion binding"/>
    <property type="evidence" value="ECO:0007669"/>
    <property type="project" value="UniProtKB-UniRule"/>
</dbReference>
<dbReference type="GO" id="GO:0016491">
    <property type="term" value="F:oxidoreductase activity"/>
    <property type="evidence" value="ECO:0007669"/>
    <property type="project" value="UniProtKB-KW"/>
</dbReference>
<dbReference type="GO" id="GO:1904047">
    <property type="term" value="F:S-adenosyl-L-methionine binding"/>
    <property type="evidence" value="ECO:0007669"/>
    <property type="project" value="UniProtKB-UniRule"/>
</dbReference>
<dbReference type="GO" id="GO:0018189">
    <property type="term" value="P:pyrroloquinoline quinone biosynthetic process"/>
    <property type="evidence" value="ECO:0007669"/>
    <property type="project" value="UniProtKB-UniRule"/>
</dbReference>
<dbReference type="CDD" id="cd01335">
    <property type="entry name" value="Radical_SAM"/>
    <property type="match status" value="1"/>
</dbReference>
<dbReference type="CDD" id="cd21119">
    <property type="entry name" value="SPASM_PqqE"/>
    <property type="match status" value="1"/>
</dbReference>
<dbReference type="Gene3D" id="3.20.20.70">
    <property type="entry name" value="Aldolase class I"/>
    <property type="match status" value="1"/>
</dbReference>
<dbReference type="HAMAP" id="MF_00660">
    <property type="entry name" value="PqqE"/>
    <property type="match status" value="1"/>
</dbReference>
<dbReference type="InterPro" id="IPR023885">
    <property type="entry name" value="4Fe4S-binding_SPASM_dom"/>
</dbReference>
<dbReference type="InterPro" id="IPR013785">
    <property type="entry name" value="Aldolase_TIM"/>
</dbReference>
<dbReference type="InterPro" id="IPR011843">
    <property type="entry name" value="PQQ_synth_PqqE_bac"/>
</dbReference>
<dbReference type="InterPro" id="IPR017200">
    <property type="entry name" value="PqqE-like"/>
</dbReference>
<dbReference type="InterPro" id="IPR050377">
    <property type="entry name" value="Radical_SAM_PqqE_MftC-like"/>
</dbReference>
<dbReference type="InterPro" id="IPR007197">
    <property type="entry name" value="rSAM"/>
</dbReference>
<dbReference type="NCBIfam" id="TIGR02109">
    <property type="entry name" value="PQQ_syn_pqqE"/>
    <property type="match status" value="1"/>
</dbReference>
<dbReference type="NCBIfam" id="TIGR04085">
    <property type="entry name" value="rSAM_more_4Fe4S"/>
    <property type="match status" value="1"/>
</dbReference>
<dbReference type="PANTHER" id="PTHR11228:SF7">
    <property type="entry name" value="PQQA PEPTIDE CYCLASE"/>
    <property type="match status" value="1"/>
</dbReference>
<dbReference type="PANTHER" id="PTHR11228">
    <property type="entry name" value="RADICAL SAM DOMAIN PROTEIN"/>
    <property type="match status" value="1"/>
</dbReference>
<dbReference type="Pfam" id="PF04055">
    <property type="entry name" value="Radical_SAM"/>
    <property type="match status" value="1"/>
</dbReference>
<dbReference type="Pfam" id="PF13186">
    <property type="entry name" value="SPASM"/>
    <property type="match status" value="1"/>
</dbReference>
<dbReference type="PIRSF" id="PIRSF037420">
    <property type="entry name" value="PQQ_syn_pqqE"/>
    <property type="match status" value="1"/>
</dbReference>
<dbReference type="SFLD" id="SFLDF00280">
    <property type="entry name" value="coenzyme_PQQ_synthesis_protein"/>
    <property type="match status" value="1"/>
</dbReference>
<dbReference type="SFLD" id="SFLDS00029">
    <property type="entry name" value="Radical_SAM"/>
    <property type="match status" value="1"/>
</dbReference>
<dbReference type="SUPFAM" id="SSF102114">
    <property type="entry name" value="Radical SAM enzymes"/>
    <property type="match status" value="1"/>
</dbReference>
<dbReference type="PROSITE" id="PS51918">
    <property type="entry name" value="RADICAL_SAM"/>
    <property type="match status" value="1"/>
</dbReference>
<accession>Q8P6M7</accession>
<name>PQQE_XANCP</name>
<comment type="function">
    <text evidence="1">Catalyzes the cross-linking of a glutamate residue and a tyrosine residue in the PqqA protein as part of the biosynthesis of pyrroloquinoline quinone (PQQ).</text>
</comment>
<comment type="catalytic activity">
    <reaction evidence="1">
        <text>[PQQ precursor protein] + S-adenosyl-L-methionine = E-Y cross-linked-[PQQ precursor protein] + 5'-deoxyadenosine + L-methionine + H(+)</text>
        <dbReference type="Rhea" id="RHEA:56836"/>
        <dbReference type="Rhea" id="RHEA-COMP:14800"/>
        <dbReference type="Rhea" id="RHEA-COMP:14801"/>
        <dbReference type="ChEBI" id="CHEBI:15378"/>
        <dbReference type="ChEBI" id="CHEBI:17319"/>
        <dbReference type="ChEBI" id="CHEBI:57844"/>
        <dbReference type="ChEBI" id="CHEBI:59789"/>
        <dbReference type="ChEBI" id="CHEBI:141026"/>
        <dbReference type="ChEBI" id="CHEBI:141027"/>
        <dbReference type="EC" id="1.21.98.4"/>
    </reaction>
</comment>
<comment type="cofactor">
    <cofactor evidence="1">
        <name>[4Fe-4S] cluster</name>
        <dbReference type="ChEBI" id="CHEBI:49883"/>
    </cofactor>
    <text evidence="1">Binds 1 [4Fe-4S] cluster. The cluster is coordinated with 3 cysteines and an exchangeable S-adenosyl-L-methionine.</text>
</comment>
<comment type="pathway">
    <text evidence="1">Cofactor biosynthesis; pyrroloquinoline quinone biosynthesis.</text>
</comment>
<comment type="subunit">
    <text evidence="1">Interacts with PqqD. The interaction is necessary for activity of PqqE.</text>
</comment>
<comment type="similarity">
    <text evidence="1">Belongs to the radical SAM superfamily. PqqE family.</text>
</comment>
<reference key="1">
    <citation type="journal article" date="2002" name="Nature">
        <title>Comparison of the genomes of two Xanthomonas pathogens with differing host specificities.</title>
        <authorList>
            <person name="da Silva A.C.R."/>
            <person name="Ferro J.A."/>
            <person name="Reinach F.C."/>
            <person name="Farah C.S."/>
            <person name="Furlan L.R."/>
            <person name="Quaggio R.B."/>
            <person name="Monteiro-Vitorello C.B."/>
            <person name="Van Sluys M.A."/>
            <person name="Almeida N.F. Jr."/>
            <person name="Alves L.M.C."/>
            <person name="do Amaral A.M."/>
            <person name="Bertolini M.C."/>
            <person name="Camargo L.E.A."/>
            <person name="Camarotte G."/>
            <person name="Cannavan F."/>
            <person name="Cardozo J."/>
            <person name="Chambergo F."/>
            <person name="Ciapina L.P."/>
            <person name="Cicarelli R.M.B."/>
            <person name="Coutinho L.L."/>
            <person name="Cursino-Santos J.R."/>
            <person name="El-Dorry H."/>
            <person name="Faria J.B."/>
            <person name="Ferreira A.J.S."/>
            <person name="Ferreira R.C.C."/>
            <person name="Ferro M.I.T."/>
            <person name="Formighieri E.F."/>
            <person name="Franco M.C."/>
            <person name="Greggio C.C."/>
            <person name="Gruber A."/>
            <person name="Katsuyama A.M."/>
            <person name="Kishi L.T."/>
            <person name="Leite R.P."/>
            <person name="Lemos E.G.M."/>
            <person name="Lemos M.V.F."/>
            <person name="Locali E.C."/>
            <person name="Machado M.A."/>
            <person name="Madeira A.M.B.N."/>
            <person name="Martinez-Rossi N.M."/>
            <person name="Martins E.C."/>
            <person name="Meidanis J."/>
            <person name="Menck C.F.M."/>
            <person name="Miyaki C.Y."/>
            <person name="Moon D.H."/>
            <person name="Moreira L.M."/>
            <person name="Novo M.T.M."/>
            <person name="Okura V.K."/>
            <person name="Oliveira M.C."/>
            <person name="Oliveira V.R."/>
            <person name="Pereira H.A."/>
            <person name="Rossi A."/>
            <person name="Sena J.A.D."/>
            <person name="Silva C."/>
            <person name="de Souza R.F."/>
            <person name="Spinola L.A.F."/>
            <person name="Takita M.A."/>
            <person name="Tamura R.E."/>
            <person name="Teixeira E.C."/>
            <person name="Tezza R.I.D."/>
            <person name="Trindade dos Santos M."/>
            <person name="Truffi D."/>
            <person name="Tsai S.M."/>
            <person name="White F.F."/>
            <person name="Setubal J.C."/>
            <person name="Kitajima J.P."/>
        </authorList>
    </citation>
    <scope>NUCLEOTIDE SEQUENCE [LARGE SCALE GENOMIC DNA]</scope>
    <source>
        <strain>ATCC 33913 / DSM 3586 / NCPPB 528 / LMG 568 / P 25</strain>
    </source>
</reference>
<proteinExistence type="inferred from homology"/>
<protein>
    <recommendedName>
        <fullName evidence="1">PqqA peptide cyclase</fullName>
        <ecNumber evidence="1">1.21.98.4</ecNumber>
    </recommendedName>
    <alternativeName>
        <fullName evidence="1">Coenzyme PQQ synthesis protein E</fullName>
    </alternativeName>
    <alternativeName>
        <fullName evidence="1">Pyrroloquinoline quinone biosynthesis protein E</fullName>
    </alternativeName>
</protein>
<keyword id="KW-0004">4Fe-4S</keyword>
<keyword id="KW-0408">Iron</keyword>
<keyword id="KW-0411">Iron-sulfur</keyword>
<keyword id="KW-0479">Metal-binding</keyword>
<keyword id="KW-0560">Oxidoreductase</keyword>
<keyword id="KW-0884">PQQ biosynthesis</keyword>
<keyword id="KW-1185">Reference proteome</keyword>
<keyword id="KW-0949">S-adenosyl-L-methionine</keyword>
<evidence type="ECO:0000255" key="1">
    <source>
        <dbReference type="HAMAP-Rule" id="MF_00660"/>
    </source>
</evidence>
<evidence type="ECO:0000255" key="2">
    <source>
        <dbReference type="PROSITE-ProRule" id="PRU01266"/>
    </source>
</evidence>
<organism>
    <name type="scientific">Xanthomonas campestris pv. campestris (strain ATCC 33913 / DSM 3586 / NCPPB 528 / LMG 568 / P 25)</name>
    <dbReference type="NCBI Taxonomy" id="190485"/>
    <lineage>
        <taxon>Bacteria</taxon>
        <taxon>Pseudomonadati</taxon>
        <taxon>Pseudomonadota</taxon>
        <taxon>Gammaproteobacteria</taxon>
        <taxon>Lysobacterales</taxon>
        <taxon>Lysobacteraceae</taxon>
        <taxon>Xanthomonas</taxon>
    </lineage>
</organism>
<sequence length="376" mass="40719">MSTVPPPLSVLLELTHRCPLACPYCSNPIALAALREEMDTAGWRSLLEQAAEMGVLQAHFSGGEPMLRKDLPELVAHARALGLYSNLITSGVAGGEPMLDQLQAAGLEHVQLSVQDVDPAGADHIAGYRNSLSKKRAFAAAVRARGLPLTLNAVIHRHNAERVPGMIALALEWGAERIEVAHTQYYGWGLRNRAALMPSREQLAATIVAVETARRSLGDQLAIDFVTPDYYARQPKPCMGGWAQRFVNISPRGDVLPCHAAETIDGLQFDNLRDRSLADIWNHGEAFARFRGTAWMPEVCQGCPKREIDWGGCRCQALALAGDAATLDPVCERSPAHAGIRATAEREAASPAPDFVYRRPERPAAVAAEAAISDTE</sequence>
<gene>
    <name evidence="1" type="primary">pqqE</name>
    <name type="ordered locus">XCC2940</name>
</gene>